<keyword id="KW-1185">Reference proteome</keyword>
<keyword id="KW-0687">Ribonucleoprotein</keyword>
<keyword id="KW-0689">Ribosomal protein</keyword>
<feature type="chain" id="PRO_0000232714" description="Large ribosomal subunit protein uL29">
    <location>
        <begin position="1"/>
        <end position="123"/>
    </location>
</feature>
<dbReference type="EMBL" id="AAGK01000001">
    <property type="protein sequence ID" value="EAN34202.1"/>
    <property type="molecule type" value="Genomic_DNA"/>
</dbReference>
<dbReference type="RefSeq" id="XP_766485.1">
    <property type="nucleotide sequence ID" value="XM_761392.1"/>
</dbReference>
<dbReference type="SMR" id="Q4N756"/>
<dbReference type="FunCoup" id="Q4N756">
    <property type="interactions" value="367"/>
</dbReference>
<dbReference type="STRING" id="5875.Q4N756"/>
<dbReference type="EnsemblProtists" id="EAN34202">
    <property type="protein sequence ID" value="EAN34202"/>
    <property type="gene ID" value="TP01_0964"/>
</dbReference>
<dbReference type="GeneID" id="3502436"/>
<dbReference type="KEGG" id="tpv:TP01_0964"/>
<dbReference type="VEuPathDB" id="PiroplasmaDB:TpMuguga_01g00964"/>
<dbReference type="eggNOG" id="KOG3436">
    <property type="taxonomic scope" value="Eukaryota"/>
</dbReference>
<dbReference type="InParanoid" id="Q4N756"/>
<dbReference type="OMA" id="VMNQKAR"/>
<dbReference type="Proteomes" id="UP000001949">
    <property type="component" value="Unassembled WGS sequence"/>
</dbReference>
<dbReference type="GO" id="GO:0022625">
    <property type="term" value="C:cytosolic large ribosomal subunit"/>
    <property type="evidence" value="ECO:0007669"/>
    <property type="project" value="InterPro"/>
</dbReference>
<dbReference type="GO" id="GO:0003729">
    <property type="term" value="F:mRNA binding"/>
    <property type="evidence" value="ECO:0007669"/>
    <property type="project" value="TreeGrafter"/>
</dbReference>
<dbReference type="GO" id="GO:0003735">
    <property type="term" value="F:structural constituent of ribosome"/>
    <property type="evidence" value="ECO:0007669"/>
    <property type="project" value="InterPro"/>
</dbReference>
<dbReference type="GO" id="GO:0000463">
    <property type="term" value="P:maturation of LSU-rRNA from tricistronic rRNA transcript (SSU-rRNA, 5.8S rRNA, LSU-rRNA)"/>
    <property type="evidence" value="ECO:0007669"/>
    <property type="project" value="InterPro"/>
</dbReference>
<dbReference type="GO" id="GO:0006412">
    <property type="term" value="P:translation"/>
    <property type="evidence" value="ECO:0007669"/>
    <property type="project" value="InterPro"/>
</dbReference>
<dbReference type="FunFam" id="1.10.287.310:FF:000002">
    <property type="entry name" value="60S ribosomal protein L35"/>
    <property type="match status" value="1"/>
</dbReference>
<dbReference type="Gene3D" id="1.10.287.310">
    <property type="match status" value="1"/>
</dbReference>
<dbReference type="Gene3D" id="6.10.250.3450">
    <property type="match status" value="1"/>
</dbReference>
<dbReference type="HAMAP" id="MF_00374">
    <property type="entry name" value="Ribosomal_uL29"/>
    <property type="match status" value="1"/>
</dbReference>
<dbReference type="InterPro" id="IPR001854">
    <property type="entry name" value="Ribosomal_uL29"/>
</dbReference>
<dbReference type="InterPro" id="IPR045059">
    <property type="entry name" value="Ribosomal_uL29_euk"/>
</dbReference>
<dbReference type="InterPro" id="IPR036049">
    <property type="entry name" value="Ribosomal_uL29_sf"/>
</dbReference>
<dbReference type="NCBIfam" id="TIGR00012">
    <property type="entry name" value="L29"/>
    <property type="match status" value="1"/>
</dbReference>
<dbReference type="PANTHER" id="PTHR45722">
    <property type="entry name" value="60S RIBOSOMAL PROTEIN L35"/>
    <property type="match status" value="1"/>
</dbReference>
<dbReference type="PANTHER" id="PTHR45722:SF2">
    <property type="entry name" value="LARGE RIBOSOMAL SUBUNIT PROTEIN UL29-RELATED"/>
    <property type="match status" value="1"/>
</dbReference>
<dbReference type="Pfam" id="PF00831">
    <property type="entry name" value="Ribosomal_L29"/>
    <property type="match status" value="1"/>
</dbReference>
<dbReference type="SUPFAM" id="SSF46561">
    <property type="entry name" value="Ribosomal protein L29 (L29p)"/>
    <property type="match status" value="1"/>
</dbReference>
<organism>
    <name type="scientific">Theileria parva</name>
    <name type="common">East coast fever infection agent</name>
    <dbReference type="NCBI Taxonomy" id="5875"/>
    <lineage>
        <taxon>Eukaryota</taxon>
        <taxon>Sar</taxon>
        <taxon>Alveolata</taxon>
        <taxon>Apicomplexa</taxon>
        <taxon>Aconoidasida</taxon>
        <taxon>Piroplasmida</taxon>
        <taxon>Theileriidae</taxon>
        <taxon>Theileria</taxon>
    </lineage>
</organism>
<sequence>MEKLRVFELREKSDAELLKLLDDLKQELATFRVSKVTATGTSKLSKITLVRKAVAKVLTVYNQRKKEEARKKYKKLSKTPLNLRPKLTRAKRKALTTKQLTMKTIKERKRAENLPKRKYALLV</sequence>
<gene>
    <name type="primary">RPL35</name>
    <name type="ordered locus">TP01_0964</name>
</gene>
<evidence type="ECO:0000305" key="1"/>
<protein>
    <recommendedName>
        <fullName evidence="1">Large ribosomal subunit protein uL29</fullName>
    </recommendedName>
    <alternativeName>
        <fullName>60S ribosomal protein L35</fullName>
    </alternativeName>
</protein>
<proteinExistence type="inferred from homology"/>
<reference key="1">
    <citation type="journal article" date="2005" name="Science">
        <title>Genome sequence of Theileria parva, a bovine pathogen that transforms lymphocytes.</title>
        <authorList>
            <person name="Gardner M.J."/>
            <person name="Bishop R."/>
            <person name="Shah T."/>
            <person name="de Villiers E.P."/>
            <person name="Carlton J.M."/>
            <person name="Hall N."/>
            <person name="Ren Q."/>
            <person name="Paulsen I.T."/>
            <person name="Pain A."/>
            <person name="Berriman M."/>
            <person name="Wilson R.J.M."/>
            <person name="Sato S."/>
            <person name="Ralph S.A."/>
            <person name="Mann D.J."/>
            <person name="Xiong Z."/>
            <person name="Shallom S.J."/>
            <person name="Weidman J."/>
            <person name="Jiang L."/>
            <person name="Lynn J."/>
            <person name="Weaver B."/>
            <person name="Shoaibi A."/>
            <person name="Domingo A.R."/>
            <person name="Wasawo D."/>
            <person name="Crabtree J."/>
            <person name="Wortman J.R."/>
            <person name="Haas B."/>
            <person name="Angiuoli S.V."/>
            <person name="Creasy T.H."/>
            <person name="Lu C."/>
            <person name="Suh B."/>
            <person name="Silva J.C."/>
            <person name="Utterback T.R."/>
            <person name="Feldblyum T.V."/>
            <person name="Pertea M."/>
            <person name="Allen J."/>
            <person name="Nierman W.C."/>
            <person name="Taracha E.L.N."/>
            <person name="Salzberg S.L."/>
            <person name="White O.R."/>
            <person name="Fitzhugh H.A."/>
            <person name="Morzaria S."/>
            <person name="Venter J.C."/>
            <person name="Fraser C.M."/>
            <person name="Nene V."/>
        </authorList>
    </citation>
    <scope>NUCLEOTIDE SEQUENCE [LARGE SCALE GENOMIC DNA]</scope>
    <source>
        <strain>Muguga</strain>
    </source>
</reference>
<accession>Q4N756</accession>
<name>RL35_THEPA</name>
<comment type="similarity">
    <text evidence="1">Belongs to the universal ribosomal protein uL29 family.</text>
</comment>